<comment type="function">
    <text evidence="1">One of the primary rRNA binding proteins. Required for association of the 30S and 50S subunits to form the 70S ribosome, for tRNA binding and peptide bond formation. It has been suggested to have peptidyltransferase activity; this is somewhat controversial. Makes several contacts with the 16S rRNA in the 70S ribosome.</text>
</comment>
<comment type="subunit">
    <text evidence="1">Part of the 50S ribosomal subunit. Forms a bridge to the 30S subunit in the 70S ribosome.</text>
</comment>
<comment type="similarity">
    <text evidence="1">Belongs to the universal ribosomal protein uL2 family.</text>
</comment>
<keyword id="KW-1185">Reference proteome</keyword>
<keyword id="KW-0687">Ribonucleoprotein</keyword>
<keyword id="KW-0689">Ribosomal protein</keyword>
<keyword id="KW-0694">RNA-binding</keyword>
<keyword id="KW-0699">rRNA-binding</keyword>
<feature type="chain" id="PRO_0000129591" description="Large ribosomal subunit protein uL2">
    <location>
        <begin position="1"/>
        <end position="276"/>
    </location>
</feature>
<feature type="region of interest" description="Disordered" evidence="2">
    <location>
        <begin position="219"/>
        <end position="276"/>
    </location>
</feature>
<protein>
    <recommendedName>
        <fullName evidence="1">Large ribosomal subunit protein uL2</fullName>
    </recommendedName>
    <alternativeName>
        <fullName evidence="3">50S ribosomal protein L2</fullName>
    </alternativeName>
</protein>
<reference key="1">
    <citation type="journal article" date="2002" name="Nucleic Acids Res.">
        <title>Genome sequence of Oceanobacillus iheyensis isolated from the Iheya Ridge and its unexpected adaptive capabilities to extreme environments.</title>
        <authorList>
            <person name="Takami H."/>
            <person name="Takaki Y."/>
            <person name="Uchiyama I."/>
        </authorList>
    </citation>
    <scope>NUCLEOTIDE SEQUENCE [LARGE SCALE GENOMIC DNA]</scope>
    <source>
        <strain>DSM 14371 / CIP 107618 / JCM 11309 / KCTC 3954 / HTE831</strain>
    </source>
</reference>
<proteinExistence type="inferred from homology"/>
<gene>
    <name evidence="1" type="primary">rplB</name>
    <name type="ordered locus">OB0122</name>
</gene>
<sequence>MAIKKFKPTSNGRRNMSVSDFAEITTDTPEKSLLSPIRKRGGRNNQGKLTVRHQGGGHKRQYRIIDFKRDKDGIPGRVATIEYDPNRSANIALVHYADGEKRYIIAPKGIKVGQEIESGENADIKLGNALPLGSIPVGTVIHNIELKPGRGGQIARSAGAEAQILGREEKYTLVRLSSGEVRLILTTCRATIGQVGNIEHELVRVGKAGRSRWKGIRPTVRGSVMNPNDHPHGGGEGRAPIGRKSPMSPWGKPTLGYKTRQRNKPSDKYIVRKRKK</sequence>
<accession>Q8ETX9</accession>
<evidence type="ECO:0000255" key="1">
    <source>
        <dbReference type="HAMAP-Rule" id="MF_01320"/>
    </source>
</evidence>
<evidence type="ECO:0000256" key="2">
    <source>
        <dbReference type="SAM" id="MobiDB-lite"/>
    </source>
</evidence>
<evidence type="ECO:0000305" key="3"/>
<name>RL2_OCEIH</name>
<dbReference type="EMBL" id="BA000028">
    <property type="protein sequence ID" value="BAC12078.1"/>
    <property type="molecule type" value="Genomic_DNA"/>
</dbReference>
<dbReference type="RefSeq" id="WP_011064525.1">
    <property type="nucleotide sequence ID" value="NC_004193.1"/>
</dbReference>
<dbReference type="SMR" id="Q8ETX9"/>
<dbReference type="STRING" id="221109.gene:10732312"/>
<dbReference type="KEGG" id="oih:OB0122"/>
<dbReference type="eggNOG" id="COG0090">
    <property type="taxonomic scope" value="Bacteria"/>
</dbReference>
<dbReference type="HOGENOM" id="CLU_036235_2_1_9"/>
<dbReference type="OrthoDB" id="9778722at2"/>
<dbReference type="PhylomeDB" id="Q8ETX9"/>
<dbReference type="Proteomes" id="UP000000822">
    <property type="component" value="Chromosome"/>
</dbReference>
<dbReference type="GO" id="GO:0015934">
    <property type="term" value="C:large ribosomal subunit"/>
    <property type="evidence" value="ECO:0007669"/>
    <property type="project" value="InterPro"/>
</dbReference>
<dbReference type="GO" id="GO:0019843">
    <property type="term" value="F:rRNA binding"/>
    <property type="evidence" value="ECO:0007669"/>
    <property type="project" value="UniProtKB-UniRule"/>
</dbReference>
<dbReference type="GO" id="GO:0003735">
    <property type="term" value="F:structural constituent of ribosome"/>
    <property type="evidence" value="ECO:0007669"/>
    <property type="project" value="InterPro"/>
</dbReference>
<dbReference type="GO" id="GO:0016740">
    <property type="term" value="F:transferase activity"/>
    <property type="evidence" value="ECO:0007669"/>
    <property type="project" value="InterPro"/>
</dbReference>
<dbReference type="GO" id="GO:0002181">
    <property type="term" value="P:cytoplasmic translation"/>
    <property type="evidence" value="ECO:0007669"/>
    <property type="project" value="TreeGrafter"/>
</dbReference>
<dbReference type="FunFam" id="2.30.30.30:FF:000001">
    <property type="entry name" value="50S ribosomal protein L2"/>
    <property type="match status" value="1"/>
</dbReference>
<dbReference type="FunFam" id="2.40.50.140:FF:000003">
    <property type="entry name" value="50S ribosomal protein L2"/>
    <property type="match status" value="1"/>
</dbReference>
<dbReference type="FunFam" id="4.10.950.10:FF:000001">
    <property type="entry name" value="50S ribosomal protein L2"/>
    <property type="match status" value="1"/>
</dbReference>
<dbReference type="Gene3D" id="2.30.30.30">
    <property type="match status" value="1"/>
</dbReference>
<dbReference type="Gene3D" id="2.40.50.140">
    <property type="entry name" value="Nucleic acid-binding proteins"/>
    <property type="match status" value="1"/>
</dbReference>
<dbReference type="Gene3D" id="4.10.950.10">
    <property type="entry name" value="Ribosomal protein L2, domain 3"/>
    <property type="match status" value="1"/>
</dbReference>
<dbReference type="HAMAP" id="MF_01320_B">
    <property type="entry name" value="Ribosomal_uL2_B"/>
    <property type="match status" value="1"/>
</dbReference>
<dbReference type="InterPro" id="IPR012340">
    <property type="entry name" value="NA-bd_OB-fold"/>
</dbReference>
<dbReference type="InterPro" id="IPR014722">
    <property type="entry name" value="Rib_uL2_dom2"/>
</dbReference>
<dbReference type="InterPro" id="IPR002171">
    <property type="entry name" value="Ribosomal_uL2"/>
</dbReference>
<dbReference type="InterPro" id="IPR005880">
    <property type="entry name" value="Ribosomal_uL2_bac/org-type"/>
</dbReference>
<dbReference type="InterPro" id="IPR022669">
    <property type="entry name" value="Ribosomal_uL2_C"/>
</dbReference>
<dbReference type="InterPro" id="IPR022671">
    <property type="entry name" value="Ribosomal_uL2_CS"/>
</dbReference>
<dbReference type="InterPro" id="IPR014726">
    <property type="entry name" value="Ribosomal_uL2_dom3"/>
</dbReference>
<dbReference type="InterPro" id="IPR022666">
    <property type="entry name" value="Ribosomal_uL2_RNA-bd_dom"/>
</dbReference>
<dbReference type="InterPro" id="IPR008991">
    <property type="entry name" value="Translation_prot_SH3-like_sf"/>
</dbReference>
<dbReference type="NCBIfam" id="TIGR01171">
    <property type="entry name" value="rplB_bact"/>
    <property type="match status" value="1"/>
</dbReference>
<dbReference type="PANTHER" id="PTHR13691:SF5">
    <property type="entry name" value="LARGE RIBOSOMAL SUBUNIT PROTEIN UL2M"/>
    <property type="match status" value="1"/>
</dbReference>
<dbReference type="PANTHER" id="PTHR13691">
    <property type="entry name" value="RIBOSOMAL PROTEIN L2"/>
    <property type="match status" value="1"/>
</dbReference>
<dbReference type="Pfam" id="PF00181">
    <property type="entry name" value="Ribosomal_L2"/>
    <property type="match status" value="1"/>
</dbReference>
<dbReference type="Pfam" id="PF03947">
    <property type="entry name" value="Ribosomal_L2_C"/>
    <property type="match status" value="1"/>
</dbReference>
<dbReference type="PIRSF" id="PIRSF002158">
    <property type="entry name" value="Ribosomal_L2"/>
    <property type="match status" value="1"/>
</dbReference>
<dbReference type="SMART" id="SM01383">
    <property type="entry name" value="Ribosomal_L2"/>
    <property type="match status" value="1"/>
</dbReference>
<dbReference type="SMART" id="SM01382">
    <property type="entry name" value="Ribosomal_L2_C"/>
    <property type="match status" value="1"/>
</dbReference>
<dbReference type="SUPFAM" id="SSF50249">
    <property type="entry name" value="Nucleic acid-binding proteins"/>
    <property type="match status" value="1"/>
</dbReference>
<dbReference type="SUPFAM" id="SSF50104">
    <property type="entry name" value="Translation proteins SH3-like domain"/>
    <property type="match status" value="1"/>
</dbReference>
<dbReference type="PROSITE" id="PS00467">
    <property type="entry name" value="RIBOSOMAL_L2"/>
    <property type="match status" value="1"/>
</dbReference>
<organism>
    <name type="scientific">Oceanobacillus iheyensis (strain DSM 14371 / CIP 107618 / JCM 11309 / KCTC 3954 / HTE831)</name>
    <dbReference type="NCBI Taxonomy" id="221109"/>
    <lineage>
        <taxon>Bacteria</taxon>
        <taxon>Bacillati</taxon>
        <taxon>Bacillota</taxon>
        <taxon>Bacilli</taxon>
        <taxon>Bacillales</taxon>
        <taxon>Bacillaceae</taxon>
        <taxon>Oceanobacillus</taxon>
    </lineage>
</organism>